<evidence type="ECO:0000255" key="1"/>
<evidence type="ECO:0000256" key="2">
    <source>
        <dbReference type="SAM" id="MobiDB-lite"/>
    </source>
</evidence>
<evidence type="ECO:0000305" key="3"/>
<name>PUP10_ARATH</name>
<reference key="1">
    <citation type="journal article" date="1999" name="Nature">
        <title>Sequence and analysis of chromosome 4 of the plant Arabidopsis thaliana.</title>
        <authorList>
            <person name="Mayer K.F.X."/>
            <person name="Schueller C."/>
            <person name="Wambutt R."/>
            <person name="Murphy G."/>
            <person name="Volckaert G."/>
            <person name="Pohl T."/>
            <person name="Duesterhoeft A."/>
            <person name="Stiekema W."/>
            <person name="Entian K.-D."/>
            <person name="Terryn N."/>
            <person name="Harris B."/>
            <person name="Ansorge W."/>
            <person name="Brandt P."/>
            <person name="Grivell L.A."/>
            <person name="Rieger M."/>
            <person name="Weichselgartner M."/>
            <person name="de Simone V."/>
            <person name="Obermaier B."/>
            <person name="Mache R."/>
            <person name="Mueller M."/>
            <person name="Kreis M."/>
            <person name="Delseny M."/>
            <person name="Puigdomenech P."/>
            <person name="Watson M."/>
            <person name="Schmidtheini T."/>
            <person name="Reichert B."/>
            <person name="Portetelle D."/>
            <person name="Perez-Alonso M."/>
            <person name="Boutry M."/>
            <person name="Bancroft I."/>
            <person name="Vos P."/>
            <person name="Hoheisel J."/>
            <person name="Zimmermann W."/>
            <person name="Wedler H."/>
            <person name="Ridley P."/>
            <person name="Langham S.-A."/>
            <person name="McCullagh B."/>
            <person name="Bilham L."/>
            <person name="Robben J."/>
            <person name="van der Schueren J."/>
            <person name="Grymonprez B."/>
            <person name="Chuang Y.-J."/>
            <person name="Vandenbussche F."/>
            <person name="Braeken M."/>
            <person name="Weltjens I."/>
            <person name="Voet M."/>
            <person name="Bastiaens I."/>
            <person name="Aert R."/>
            <person name="Defoor E."/>
            <person name="Weitzenegger T."/>
            <person name="Bothe G."/>
            <person name="Ramsperger U."/>
            <person name="Hilbert H."/>
            <person name="Braun M."/>
            <person name="Holzer E."/>
            <person name="Brandt A."/>
            <person name="Peters S."/>
            <person name="van Staveren M."/>
            <person name="Dirkse W."/>
            <person name="Mooijman P."/>
            <person name="Klein Lankhorst R."/>
            <person name="Rose M."/>
            <person name="Hauf J."/>
            <person name="Koetter P."/>
            <person name="Berneiser S."/>
            <person name="Hempel S."/>
            <person name="Feldpausch M."/>
            <person name="Lamberth S."/>
            <person name="Van den Daele H."/>
            <person name="De Keyser A."/>
            <person name="Buysshaert C."/>
            <person name="Gielen J."/>
            <person name="Villarroel R."/>
            <person name="De Clercq R."/>
            <person name="van Montagu M."/>
            <person name="Rogers J."/>
            <person name="Cronin A."/>
            <person name="Quail M.A."/>
            <person name="Bray-Allen S."/>
            <person name="Clark L."/>
            <person name="Doggett J."/>
            <person name="Hall S."/>
            <person name="Kay M."/>
            <person name="Lennard N."/>
            <person name="McLay K."/>
            <person name="Mayes R."/>
            <person name="Pettett A."/>
            <person name="Rajandream M.A."/>
            <person name="Lyne M."/>
            <person name="Benes V."/>
            <person name="Rechmann S."/>
            <person name="Borkova D."/>
            <person name="Bloecker H."/>
            <person name="Scharfe M."/>
            <person name="Grimm M."/>
            <person name="Loehnert T.-H."/>
            <person name="Dose S."/>
            <person name="de Haan M."/>
            <person name="Maarse A.C."/>
            <person name="Schaefer M."/>
            <person name="Mueller-Auer S."/>
            <person name="Gabel C."/>
            <person name="Fuchs M."/>
            <person name="Fartmann B."/>
            <person name="Granderath K."/>
            <person name="Dauner D."/>
            <person name="Herzl A."/>
            <person name="Neumann S."/>
            <person name="Argiriou A."/>
            <person name="Vitale D."/>
            <person name="Liguori R."/>
            <person name="Piravandi E."/>
            <person name="Massenet O."/>
            <person name="Quigley F."/>
            <person name="Clabauld G."/>
            <person name="Muendlein A."/>
            <person name="Felber R."/>
            <person name="Schnabl S."/>
            <person name="Hiller R."/>
            <person name="Schmidt W."/>
            <person name="Lecharny A."/>
            <person name="Aubourg S."/>
            <person name="Chefdor F."/>
            <person name="Cooke R."/>
            <person name="Berger C."/>
            <person name="Monfort A."/>
            <person name="Casacuberta E."/>
            <person name="Gibbons T."/>
            <person name="Weber N."/>
            <person name="Vandenbol M."/>
            <person name="Bargues M."/>
            <person name="Terol J."/>
            <person name="Torres A."/>
            <person name="Perez-Perez A."/>
            <person name="Purnelle B."/>
            <person name="Bent E."/>
            <person name="Johnson S."/>
            <person name="Tacon D."/>
            <person name="Jesse T."/>
            <person name="Heijnen L."/>
            <person name="Schwarz S."/>
            <person name="Scholler P."/>
            <person name="Heber S."/>
            <person name="Francs P."/>
            <person name="Bielke C."/>
            <person name="Frishman D."/>
            <person name="Haase D."/>
            <person name="Lemcke K."/>
            <person name="Mewes H.-W."/>
            <person name="Stocker S."/>
            <person name="Zaccaria P."/>
            <person name="Bevan M."/>
            <person name="Wilson R.K."/>
            <person name="de la Bastide M."/>
            <person name="Habermann K."/>
            <person name="Parnell L."/>
            <person name="Dedhia N."/>
            <person name="Gnoj L."/>
            <person name="Schutz K."/>
            <person name="Huang E."/>
            <person name="Spiegel L."/>
            <person name="Sekhon M."/>
            <person name="Murray J."/>
            <person name="Sheet P."/>
            <person name="Cordes M."/>
            <person name="Abu-Threideh J."/>
            <person name="Stoneking T."/>
            <person name="Kalicki J."/>
            <person name="Graves T."/>
            <person name="Harmon G."/>
            <person name="Edwards J."/>
            <person name="Latreille P."/>
            <person name="Courtney L."/>
            <person name="Cloud J."/>
            <person name="Abbott A."/>
            <person name="Scott K."/>
            <person name="Johnson D."/>
            <person name="Minx P."/>
            <person name="Bentley D."/>
            <person name="Fulton B."/>
            <person name="Miller N."/>
            <person name="Greco T."/>
            <person name="Kemp K."/>
            <person name="Kramer J."/>
            <person name="Fulton L."/>
            <person name="Mardis E."/>
            <person name="Dante M."/>
            <person name="Pepin K."/>
            <person name="Hillier L.W."/>
            <person name="Nelson J."/>
            <person name="Spieth J."/>
            <person name="Ryan E."/>
            <person name="Andrews S."/>
            <person name="Geisel C."/>
            <person name="Layman D."/>
            <person name="Du H."/>
            <person name="Ali J."/>
            <person name="Berghoff A."/>
            <person name="Jones K."/>
            <person name="Drone K."/>
            <person name="Cotton M."/>
            <person name="Joshu C."/>
            <person name="Antonoiu B."/>
            <person name="Zidanic M."/>
            <person name="Strong C."/>
            <person name="Sun H."/>
            <person name="Lamar B."/>
            <person name="Yordan C."/>
            <person name="Ma P."/>
            <person name="Zhong J."/>
            <person name="Preston R."/>
            <person name="Vil D."/>
            <person name="Shekher M."/>
            <person name="Matero A."/>
            <person name="Shah R."/>
            <person name="Swaby I.K."/>
            <person name="O'Shaughnessy A."/>
            <person name="Rodriguez M."/>
            <person name="Hoffman J."/>
            <person name="Till S."/>
            <person name="Granat S."/>
            <person name="Shohdy N."/>
            <person name="Hasegawa A."/>
            <person name="Hameed A."/>
            <person name="Lodhi M."/>
            <person name="Johnson A."/>
            <person name="Chen E."/>
            <person name="Marra M.A."/>
            <person name="Martienssen R."/>
            <person name="McCombie W.R."/>
        </authorList>
    </citation>
    <scope>NUCLEOTIDE SEQUENCE [LARGE SCALE GENOMIC DNA]</scope>
    <source>
        <strain>cv. Columbia</strain>
    </source>
</reference>
<reference key="2">
    <citation type="journal article" date="2017" name="Plant J.">
        <title>Araport11: a complete reannotation of the Arabidopsis thaliana reference genome.</title>
        <authorList>
            <person name="Cheng C.Y."/>
            <person name="Krishnakumar V."/>
            <person name="Chan A.P."/>
            <person name="Thibaud-Nissen F."/>
            <person name="Schobel S."/>
            <person name="Town C.D."/>
        </authorList>
    </citation>
    <scope>GENOME REANNOTATION</scope>
    <source>
        <strain>cv. Columbia</strain>
    </source>
</reference>
<reference key="3">
    <citation type="submission" date="2004-09" db="EMBL/GenBank/DDBJ databases">
        <title>Large-scale analysis of RIKEN Arabidopsis full-length (RAFL) cDNAs.</title>
        <authorList>
            <person name="Totoki Y."/>
            <person name="Seki M."/>
            <person name="Ishida J."/>
            <person name="Nakajima M."/>
            <person name="Enju A."/>
            <person name="Kamiya A."/>
            <person name="Narusaka M."/>
            <person name="Shin-i T."/>
            <person name="Nakagawa M."/>
            <person name="Sakamoto N."/>
            <person name="Oishi K."/>
            <person name="Kohara Y."/>
            <person name="Kobayashi M."/>
            <person name="Toyoda A."/>
            <person name="Sakaki Y."/>
            <person name="Sakurai T."/>
            <person name="Iida K."/>
            <person name="Akiyama K."/>
            <person name="Satou M."/>
            <person name="Toyoda T."/>
            <person name="Konagaya A."/>
            <person name="Carninci P."/>
            <person name="Kawai J."/>
            <person name="Hayashizaki Y."/>
            <person name="Shinozaki K."/>
        </authorList>
    </citation>
    <scope>NUCLEOTIDE SEQUENCE [LARGE SCALE MRNA] OF 1-145</scope>
    <source>
        <strain>cv. Columbia</strain>
    </source>
</reference>
<reference key="4">
    <citation type="journal article" date="2003" name="Science">
        <title>Empirical analysis of transcriptional activity in the Arabidopsis genome.</title>
        <authorList>
            <person name="Yamada K."/>
            <person name="Lim J."/>
            <person name="Dale J.M."/>
            <person name="Chen H."/>
            <person name="Shinn P."/>
            <person name="Palm C.J."/>
            <person name="Southwick A.M."/>
            <person name="Wu H.C."/>
            <person name="Kim C.J."/>
            <person name="Nguyen M."/>
            <person name="Pham P.K."/>
            <person name="Cheuk R.F."/>
            <person name="Karlin-Newmann G."/>
            <person name="Liu S.X."/>
            <person name="Lam B."/>
            <person name="Sakano H."/>
            <person name="Wu T."/>
            <person name="Yu G."/>
            <person name="Miranda M."/>
            <person name="Quach H.L."/>
            <person name="Tripp M."/>
            <person name="Chang C.H."/>
            <person name="Lee J.M."/>
            <person name="Toriumi M.J."/>
            <person name="Chan M.M."/>
            <person name="Tang C.C."/>
            <person name="Onodera C.S."/>
            <person name="Deng J.M."/>
            <person name="Akiyama K."/>
            <person name="Ansari Y."/>
            <person name="Arakawa T."/>
            <person name="Banh J."/>
            <person name="Banno F."/>
            <person name="Bowser L."/>
            <person name="Brooks S.Y."/>
            <person name="Carninci P."/>
            <person name="Chao Q."/>
            <person name="Choy N."/>
            <person name="Enju A."/>
            <person name="Goldsmith A.D."/>
            <person name="Gurjal M."/>
            <person name="Hansen N.F."/>
            <person name="Hayashizaki Y."/>
            <person name="Johnson-Hopson C."/>
            <person name="Hsuan V.W."/>
            <person name="Iida K."/>
            <person name="Karnes M."/>
            <person name="Khan S."/>
            <person name="Koesema E."/>
            <person name="Ishida J."/>
            <person name="Jiang P.X."/>
            <person name="Jones T."/>
            <person name="Kawai J."/>
            <person name="Kamiya A."/>
            <person name="Meyers C."/>
            <person name="Nakajima M."/>
            <person name="Narusaka M."/>
            <person name="Seki M."/>
            <person name="Sakurai T."/>
            <person name="Satou M."/>
            <person name="Tamse R."/>
            <person name="Vaysberg M."/>
            <person name="Wallender E.K."/>
            <person name="Wong C."/>
            <person name="Yamamura Y."/>
            <person name="Yuan S."/>
            <person name="Shinozaki K."/>
            <person name="Davis R.W."/>
            <person name="Theologis A."/>
            <person name="Ecker J.R."/>
        </authorList>
    </citation>
    <scope>NUCLEOTIDE SEQUENCE [LARGE SCALE MRNA] OF 24-390</scope>
    <source>
        <strain>cv. Columbia</strain>
    </source>
</reference>
<reference key="5">
    <citation type="journal article" date="2000" name="Plant Cell">
        <title>A new family of high-affinity transporters for adenine, cytosine, and purine derivatives in Arabidopsis.</title>
        <authorList>
            <person name="Gillissen B."/>
            <person name="Buerkle L."/>
            <person name="Andre B."/>
            <person name="Kuehn C."/>
            <person name="Rentsch D."/>
            <person name="Brandl B."/>
            <person name="Frommer W.B."/>
        </authorList>
    </citation>
    <scope>GENE FAMILY</scope>
    <scope>NOMENCLATURE</scope>
</reference>
<organism>
    <name type="scientific">Arabidopsis thaliana</name>
    <name type="common">Mouse-ear cress</name>
    <dbReference type="NCBI Taxonomy" id="3702"/>
    <lineage>
        <taxon>Eukaryota</taxon>
        <taxon>Viridiplantae</taxon>
        <taxon>Streptophyta</taxon>
        <taxon>Embryophyta</taxon>
        <taxon>Tracheophyta</taxon>
        <taxon>Spermatophyta</taxon>
        <taxon>Magnoliopsida</taxon>
        <taxon>eudicotyledons</taxon>
        <taxon>Gunneridae</taxon>
        <taxon>Pentapetalae</taxon>
        <taxon>rosids</taxon>
        <taxon>malvids</taxon>
        <taxon>Brassicales</taxon>
        <taxon>Brassicaceae</taxon>
        <taxon>Camelineae</taxon>
        <taxon>Arabidopsis</taxon>
    </lineage>
</organism>
<proteinExistence type="evidence at transcript level"/>
<gene>
    <name type="primary">PUP10</name>
    <name type="ordered locus">At4g18210</name>
    <name type="ORF">T9A21.60</name>
</gene>
<dbReference type="EMBL" id="AL021713">
    <property type="protein sequence ID" value="CAA16793.1"/>
    <property type="status" value="ALT_SEQ"/>
    <property type="molecule type" value="Genomic_DNA"/>
</dbReference>
<dbReference type="EMBL" id="AL161548">
    <property type="protein sequence ID" value="CAB78823.1"/>
    <property type="status" value="ALT_SEQ"/>
    <property type="molecule type" value="Genomic_DNA"/>
</dbReference>
<dbReference type="EMBL" id="CP002687">
    <property type="protein sequence ID" value="AEE84012.1"/>
    <property type="molecule type" value="Genomic_DNA"/>
</dbReference>
<dbReference type="EMBL" id="AK175174">
    <property type="protein sequence ID" value="BAD42937.1"/>
    <property type="molecule type" value="mRNA"/>
</dbReference>
<dbReference type="EMBL" id="AF370622">
    <property type="protein sequence ID" value="AAK43941.1"/>
    <property type="molecule type" value="mRNA"/>
</dbReference>
<dbReference type="PIR" id="T04923">
    <property type="entry name" value="T04923"/>
</dbReference>
<dbReference type="RefSeq" id="NP_193555.3">
    <property type="nucleotide sequence ID" value="NM_117931.6"/>
</dbReference>
<dbReference type="SMR" id="O49725"/>
<dbReference type="STRING" id="3702.O49725"/>
<dbReference type="PaxDb" id="3702-AT4G18210.1"/>
<dbReference type="ProteomicsDB" id="224866"/>
<dbReference type="EnsemblPlants" id="AT4G18210.1">
    <property type="protein sequence ID" value="AT4G18210.1"/>
    <property type="gene ID" value="AT4G18210"/>
</dbReference>
<dbReference type="GeneID" id="827546"/>
<dbReference type="Gramene" id="AT4G18210.1">
    <property type="protein sequence ID" value="AT4G18210.1"/>
    <property type="gene ID" value="AT4G18210"/>
</dbReference>
<dbReference type="KEGG" id="ath:AT4G18210"/>
<dbReference type="Araport" id="AT4G18210"/>
<dbReference type="TAIR" id="AT4G18210">
    <property type="gene designation" value="PUP10"/>
</dbReference>
<dbReference type="eggNOG" id="ENOG502QVMQ">
    <property type="taxonomic scope" value="Eukaryota"/>
</dbReference>
<dbReference type="HOGENOM" id="CLU_043459_2_1_1"/>
<dbReference type="InParanoid" id="O49725"/>
<dbReference type="OMA" id="ESHSNRY"/>
<dbReference type="PhylomeDB" id="O49725"/>
<dbReference type="PRO" id="PR:O49725"/>
<dbReference type="Proteomes" id="UP000006548">
    <property type="component" value="Chromosome 4"/>
</dbReference>
<dbReference type="ExpressionAtlas" id="O49725">
    <property type="expression patterns" value="baseline and differential"/>
</dbReference>
<dbReference type="GO" id="GO:0016020">
    <property type="term" value="C:membrane"/>
    <property type="evidence" value="ECO:0000304"/>
    <property type="project" value="TAIR"/>
</dbReference>
<dbReference type="GO" id="GO:0005345">
    <property type="term" value="F:purine nucleobase transmembrane transporter activity"/>
    <property type="evidence" value="ECO:0000304"/>
    <property type="project" value="TAIR"/>
</dbReference>
<dbReference type="GO" id="GO:0015211">
    <property type="term" value="F:purine nucleoside transmembrane transporter activity"/>
    <property type="evidence" value="ECO:0007669"/>
    <property type="project" value="InterPro"/>
</dbReference>
<dbReference type="GO" id="GO:0006863">
    <property type="term" value="P:purine nucleobase transport"/>
    <property type="evidence" value="ECO:0000304"/>
    <property type="project" value="TAIR"/>
</dbReference>
<dbReference type="GO" id="GO:0009624">
    <property type="term" value="P:response to nematode"/>
    <property type="evidence" value="ECO:0007007"/>
    <property type="project" value="TAIR"/>
</dbReference>
<dbReference type="InterPro" id="IPR030182">
    <property type="entry name" value="PUP_plant"/>
</dbReference>
<dbReference type="PANTHER" id="PTHR31376">
    <property type="entry name" value="OS09G0467300 PROTEIN-RELATED"/>
    <property type="match status" value="1"/>
</dbReference>
<dbReference type="PANTHER" id="PTHR31376:SF17">
    <property type="entry name" value="PURINE PERMEASE 21-RELATED"/>
    <property type="match status" value="1"/>
</dbReference>
<dbReference type="Pfam" id="PF16913">
    <property type="entry name" value="PUNUT"/>
    <property type="match status" value="1"/>
</dbReference>
<dbReference type="SUPFAM" id="SSF103481">
    <property type="entry name" value="Multidrug resistance efflux transporter EmrE"/>
    <property type="match status" value="1"/>
</dbReference>
<feature type="chain" id="PRO_0000317397" description="Probable purine permease 10">
    <location>
        <begin position="1"/>
        <end position="390"/>
    </location>
</feature>
<feature type="transmembrane region" description="Helical" evidence="1">
    <location>
        <begin position="44"/>
        <end position="64"/>
    </location>
</feature>
<feature type="transmembrane region" description="Helical" evidence="1">
    <location>
        <begin position="78"/>
        <end position="98"/>
    </location>
</feature>
<feature type="transmembrane region" description="Helical" evidence="1">
    <location>
        <begin position="117"/>
        <end position="137"/>
    </location>
</feature>
<feature type="transmembrane region" description="Helical" evidence="1">
    <location>
        <begin position="140"/>
        <end position="160"/>
    </location>
</feature>
<feature type="transmembrane region" description="Helical" evidence="1">
    <location>
        <begin position="169"/>
        <end position="189"/>
    </location>
</feature>
<feature type="transmembrane region" description="Helical" evidence="1">
    <location>
        <begin position="204"/>
        <end position="224"/>
    </location>
</feature>
<feature type="transmembrane region" description="Helical" evidence="1">
    <location>
        <begin position="241"/>
        <end position="261"/>
    </location>
</feature>
<feature type="transmembrane region" description="Helical" evidence="1">
    <location>
        <begin position="287"/>
        <end position="307"/>
    </location>
</feature>
<feature type="transmembrane region" description="Helical" evidence="1">
    <location>
        <begin position="312"/>
        <end position="332"/>
    </location>
</feature>
<feature type="transmembrane region" description="Helical" evidence="1">
    <location>
        <begin position="336"/>
        <end position="356"/>
    </location>
</feature>
<feature type="region of interest" description="Disordered" evidence="2">
    <location>
        <begin position="370"/>
        <end position="390"/>
    </location>
</feature>
<comment type="subcellular location">
    <subcellularLocation>
        <location evidence="3">Membrane</location>
        <topology evidence="3">Multi-pass membrane protein</topology>
    </subcellularLocation>
</comment>
<comment type="similarity">
    <text evidence="3">Belongs to the purine permeases (TC 2.A.7.14) family.</text>
</comment>
<comment type="sequence caution" evidence="3">
    <conflict type="erroneous gene model prediction">
        <sequence resource="EMBL-CDS" id="CAA16793"/>
    </conflict>
</comment>
<comment type="sequence caution" evidence="3">
    <conflict type="erroneous gene model prediction">
        <sequence resource="EMBL-CDS" id="CAB78823"/>
    </conflict>
</comment>
<sequence>MTADQELQIIVRQGKEPNPTVQDERNSVSSSQAEVSHSNTYKRWLRVTLYTFFVISGQTVATILGRVYYDNGGNSKWLATVVQLVGFPVLLPYYILSFKTHATTDRDGKRTSPRNRVLVYVVLGLLVGADCYLYSIGLLYLPVSTYSLICASQLAFNAFFSYFLNSQKLTPIILNSLFLLTISSTLLAFNNEETDSTKVTKGEYVKGFICTVAASAGYGLVLSLQQLAFLKVLKKQNFSEVMDMIIYVSLVASCVSVVGLFASSEWKTLSSEMDNYKHGKVSYIMNLVWTAVTWQVFSIGGTGLIFELSSLFSNAISVLGLPVVPILAVIIFHDKMNGLKVISMILAIWGFTSYVYQQYLDDKNLKKNHEITTTESPDPPEAEESTWQSK</sequence>
<keyword id="KW-0472">Membrane</keyword>
<keyword id="KW-1185">Reference proteome</keyword>
<keyword id="KW-0812">Transmembrane</keyword>
<keyword id="KW-1133">Transmembrane helix</keyword>
<keyword id="KW-0813">Transport</keyword>
<accession>O49725</accession>
<accession>Q683E3</accession>
<accession>Q94JW7</accession>
<protein>
    <recommendedName>
        <fullName>Probable purine permease 10</fullName>
        <shortName>AtPUP10</shortName>
    </recommendedName>
</protein>